<gene>
    <name type="primary">RPE1</name>
    <name type="ordered locus">CAGL0L05478g</name>
</gene>
<organism>
    <name type="scientific">Candida glabrata (strain ATCC 2001 / BCRC 20586 / JCM 3761 / NBRC 0622 / NRRL Y-65 / CBS 138)</name>
    <name type="common">Yeast</name>
    <name type="synonym">Nakaseomyces glabratus</name>
    <dbReference type="NCBI Taxonomy" id="284593"/>
    <lineage>
        <taxon>Eukaryota</taxon>
        <taxon>Fungi</taxon>
        <taxon>Dikarya</taxon>
        <taxon>Ascomycota</taxon>
        <taxon>Saccharomycotina</taxon>
        <taxon>Saccharomycetes</taxon>
        <taxon>Saccharomycetales</taxon>
        <taxon>Saccharomycetaceae</taxon>
        <taxon>Nakaseomyces</taxon>
    </lineage>
</organism>
<dbReference type="EC" id="5.1.3.1" evidence="2"/>
<dbReference type="EMBL" id="CR380958">
    <property type="protein sequence ID" value="CAG61983.1"/>
    <property type="molecule type" value="Genomic_DNA"/>
</dbReference>
<dbReference type="RefSeq" id="XP_449013.1">
    <property type="nucleotide sequence ID" value="XM_449013.1"/>
</dbReference>
<dbReference type="SMR" id="Q6FL81"/>
<dbReference type="FunCoup" id="Q6FL81">
    <property type="interactions" value="478"/>
</dbReference>
<dbReference type="STRING" id="284593.Q6FL81"/>
<dbReference type="EnsemblFungi" id="CAGL0L05478g-T">
    <property type="protein sequence ID" value="CAGL0L05478g-T-p1"/>
    <property type="gene ID" value="CAGL0L05478g"/>
</dbReference>
<dbReference type="KEGG" id="cgr:2890792"/>
<dbReference type="CGD" id="CAL0136144">
    <property type="gene designation" value="CAGL0L05478g"/>
</dbReference>
<dbReference type="VEuPathDB" id="FungiDB:B1J91_L05478g"/>
<dbReference type="VEuPathDB" id="FungiDB:CAGL0L05478g"/>
<dbReference type="eggNOG" id="KOG3111">
    <property type="taxonomic scope" value="Eukaryota"/>
</dbReference>
<dbReference type="HOGENOM" id="CLU_054856_0_1_1"/>
<dbReference type="InParanoid" id="Q6FL81"/>
<dbReference type="OMA" id="CHLMIED"/>
<dbReference type="UniPathway" id="UPA00115">
    <property type="reaction ID" value="UER00411"/>
</dbReference>
<dbReference type="Proteomes" id="UP000002428">
    <property type="component" value="Chromosome L"/>
</dbReference>
<dbReference type="GO" id="GO:0004750">
    <property type="term" value="F:D-ribulose-phosphate 3-epimerase activity"/>
    <property type="evidence" value="ECO:0007669"/>
    <property type="project" value="UniProtKB-EC"/>
</dbReference>
<dbReference type="GO" id="GO:0046872">
    <property type="term" value="F:metal ion binding"/>
    <property type="evidence" value="ECO:0007669"/>
    <property type="project" value="UniProtKB-KW"/>
</dbReference>
<dbReference type="GO" id="GO:0005975">
    <property type="term" value="P:carbohydrate metabolic process"/>
    <property type="evidence" value="ECO:0007669"/>
    <property type="project" value="InterPro"/>
</dbReference>
<dbReference type="GO" id="GO:0006098">
    <property type="term" value="P:pentose-phosphate shunt"/>
    <property type="evidence" value="ECO:0007669"/>
    <property type="project" value="UniProtKB-UniPathway"/>
</dbReference>
<dbReference type="CDD" id="cd00429">
    <property type="entry name" value="RPE"/>
    <property type="match status" value="1"/>
</dbReference>
<dbReference type="FunFam" id="3.20.20.70:FF:000074">
    <property type="entry name" value="Ribulose-phosphate 3-epimerase"/>
    <property type="match status" value="1"/>
</dbReference>
<dbReference type="Gene3D" id="3.20.20.70">
    <property type="entry name" value="Aldolase class I"/>
    <property type="match status" value="1"/>
</dbReference>
<dbReference type="HAMAP" id="MF_02227">
    <property type="entry name" value="RPE"/>
    <property type="match status" value="1"/>
</dbReference>
<dbReference type="InterPro" id="IPR013785">
    <property type="entry name" value="Aldolase_TIM"/>
</dbReference>
<dbReference type="InterPro" id="IPR026019">
    <property type="entry name" value="Ribul_P_3_epim"/>
</dbReference>
<dbReference type="InterPro" id="IPR000056">
    <property type="entry name" value="Ribul_P_3_epim-like"/>
</dbReference>
<dbReference type="InterPro" id="IPR011060">
    <property type="entry name" value="RibuloseP-bd_barrel"/>
</dbReference>
<dbReference type="NCBIfam" id="NF004076">
    <property type="entry name" value="PRK05581.1-4"/>
    <property type="match status" value="1"/>
</dbReference>
<dbReference type="NCBIfam" id="TIGR01163">
    <property type="entry name" value="rpe"/>
    <property type="match status" value="1"/>
</dbReference>
<dbReference type="PANTHER" id="PTHR11749">
    <property type="entry name" value="RIBULOSE-5-PHOSPHATE-3-EPIMERASE"/>
    <property type="match status" value="1"/>
</dbReference>
<dbReference type="Pfam" id="PF00834">
    <property type="entry name" value="Ribul_P_3_epim"/>
    <property type="match status" value="1"/>
</dbReference>
<dbReference type="PIRSF" id="PIRSF001461">
    <property type="entry name" value="RPE"/>
    <property type="match status" value="1"/>
</dbReference>
<dbReference type="SUPFAM" id="SSF51366">
    <property type="entry name" value="Ribulose-phoshate binding barrel"/>
    <property type="match status" value="1"/>
</dbReference>
<dbReference type="PROSITE" id="PS01085">
    <property type="entry name" value="RIBUL_P_3_EPIMER_1"/>
    <property type="match status" value="1"/>
</dbReference>
<dbReference type="PROSITE" id="PS01086">
    <property type="entry name" value="RIBUL_P_3_EPIMER_2"/>
    <property type="match status" value="1"/>
</dbReference>
<sequence length="246" mass="26854">MVKPIIAPSILASDFANLGCECHRVINSGAEWLHIDVMDGHFVPNITLGQPIVTSLRRAVPRSQEEEKASGEVARPTAFFDCHMMVEEPEKWVADFAKAGADQFTFHYEATKDPLSLVKLIKENGIKAACAIKPGTPVDVLFELAPYLDMALVMTVEPGFGGQKFMPDMMPKVEALRTKFPHMNIQVDGGLGKETIGVAAKAGANVIVAGTSVFTASDPHEVISFMKEEVRKELKAKHILGDETKH</sequence>
<protein>
    <recommendedName>
        <fullName>Ribulose-phosphate 3-epimerase</fullName>
        <ecNumber evidence="2">5.1.3.1</ecNumber>
    </recommendedName>
    <alternativeName>
        <fullName>Pentose-5-phosphate 3-epimerase</fullName>
        <shortName>PPE</shortName>
    </alternativeName>
    <alternativeName>
        <fullName>RPE</fullName>
    </alternativeName>
</protein>
<comment type="function">
    <text evidence="2">Catalyzes the reversible epimerization of D-ribulose 5-phosphate to D-xylulose 5-phosphate.</text>
</comment>
<comment type="catalytic activity">
    <reaction evidence="2">
        <text>D-ribulose 5-phosphate = D-xylulose 5-phosphate</text>
        <dbReference type="Rhea" id="RHEA:13677"/>
        <dbReference type="ChEBI" id="CHEBI:57737"/>
        <dbReference type="ChEBI" id="CHEBI:58121"/>
        <dbReference type="EC" id="5.1.3.1"/>
    </reaction>
</comment>
<comment type="cofactor">
    <cofactor evidence="2">
        <name>Co(2+)</name>
        <dbReference type="ChEBI" id="CHEBI:48828"/>
    </cofactor>
    <cofactor evidence="2">
        <name>Fe(2+)</name>
        <dbReference type="ChEBI" id="CHEBI:29033"/>
    </cofactor>
    <cofactor evidence="2">
        <name>Mn(2+)</name>
        <dbReference type="ChEBI" id="CHEBI:29035"/>
    </cofactor>
    <cofactor evidence="2">
        <name>Zn(2+)</name>
        <dbReference type="ChEBI" id="CHEBI:29105"/>
    </cofactor>
    <text evidence="2">Binds 1 divalent metal cation per subunit. Active with Co(2+), Fe(2+), Mn(2+) and Zn(2+).</text>
</comment>
<comment type="pathway">
    <text>Carbohydrate degradation; pentose phosphate pathway; D-xylulose 5-phosphate from D-ribulose 5-phosphate (non-oxidative stage): step 1/1.</text>
</comment>
<comment type="similarity">
    <text evidence="3">Belongs to the ribulose-phosphate 3-epimerase family.</text>
</comment>
<evidence type="ECO:0000250" key="1">
    <source>
        <dbReference type="UniProtKB" id="P32719"/>
    </source>
</evidence>
<evidence type="ECO:0000250" key="2">
    <source>
        <dbReference type="UniProtKB" id="Q96AT9"/>
    </source>
</evidence>
<evidence type="ECO:0000305" key="3"/>
<accession>Q6FL81</accession>
<name>RPE_CANGA</name>
<reference key="1">
    <citation type="journal article" date="2004" name="Nature">
        <title>Genome evolution in yeasts.</title>
        <authorList>
            <person name="Dujon B."/>
            <person name="Sherman D."/>
            <person name="Fischer G."/>
            <person name="Durrens P."/>
            <person name="Casaregola S."/>
            <person name="Lafontaine I."/>
            <person name="de Montigny J."/>
            <person name="Marck C."/>
            <person name="Neuveglise C."/>
            <person name="Talla E."/>
            <person name="Goffard N."/>
            <person name="Frangeul L."/>
            <person name="Aigle M."/>
            <person name="Anthouard V."/>
            <person name="Babour A."/>
            <person name="Barbe V."/>
            <person name="Barnay S."/>
            <person name="Blanchin S."/>
            <person name="Beckerich J.-M."/>
            <person name="Beyne E."/>
            <person name="Bleykasten C."/>
            <person name="Boisrame A."/>
            <person name="Boyer J."/>
            <person name="Cattolico L."/>
            <person name="Confanioleri F."/>
            <person name="de Daruvar A."/>
            <person name="Despons L."/>
            <person name="Fabre E."/>
            <person name="Fairhead C."/>
            <person name="Ferry-Dumazet H."/>
            <person name="Groppi A."/>
            <person name="Hantraye F."/>
            <person name="Hennequin C."/>
            <person name="Jauniaux N."/>
            <person name="Joyet P."/>
            <person name="Kachouri R."/>
            <person name="Kerrest A."/>
            <person name="Koszul R."/>
            <person name="Lemaire M."/>
            <person name="Lesur I."/>
            <person name="Ma L."/>
            <person name="Muller H."/>
            <person name="Nicaud J.-M."/>
            <person name="Nikolski M."/>
            <person name="Oztas S."/>
            <person name="Ozier-Kalogeropoulos O."/>
            <person name="Pellenz S."/>
            <person name="Potier S."/>
            <person name="Richard G.-F."/>
            <person name="Straub M.-L."/>
            <person name="Suleau A."/>
            <person name="Swennen D."/>
            <person name="Tekaia F."/>
            <person name="Wesolowski-Louvel M."/>
            <person name="Westhof E."/>
            <person name="Wirth B."/>
            <person name="Zeniou-Meyer M."/>
            <person name="Zivanovic Y."/>
            <person name="Bolotin-Fukuhara M."/>
            <person name="Thierry A."/>
            <person name="Bouchier C."/>
            <person name="Caudron B."/>
            <person name="Scarpelli C."/>
            <person name="Gaillardin C."/>
            <person name="Weissenbach J."/>
            <person name="Wincker P."/>
            <person name="Souciet J.-L."/>
        </authorList>
    </citation>
    <scope>NUCLEOTIDE SEQUENCE [LARGE SCALE GENOMIC DNA]</scope>
    <source>
        <strain>ATCC 2001 / BCRC 20586 / JCM 3761 / NBRC 0622 / NRRL Y-65 / CBS 138</strain>
    </source>
</reference>
<proteinExistence type="inferred from homology"/>
<keyword id="KW-0119">Carbohydrate metabolism</keyword>
<keyword id="KW-0170">Cobalt</keyword>
<keyword id="KW-0408">Iron</keyword>
<keyword id="KW-0413">Isomerase</keyword>
<keyword id="KW-0464">Manganese</keyword>
<keyword id="KW-0479">Metal-binding</keyword>
<keyword id="KW-1185">Reference proteome</keyword>
<keyword id="KW-0862">Zinc</keyword>
<feature type="chain" id="PRO_0000171592" description="Ribulose-phosphate 3-epimerase">
    <location>
        <begin position="1"/>
        <end position="246"/>
    </location>
</feature>
<feature type="active site" description="Proton acceptor" evidence="1">
    <location>
        <position position="36"/>
    </location>
</feature>
<feature type="active site" description="Proton donor" evidence="1">
    <location>
        <position position="188"/>
    </location>
</feature>
<feature type="binding site" evidence="1">
    <location>
        <position position="9"/>
    </location>
    <ligand>
        <name>substrate</name>
    </ligand>
</feature>
<feature type="binding site" evidence="1">
    <location>
        <position position="34"/>
    </location>
    <ligand>
        <name>a divalent metal cation</name>
        <dbReference type="ChEBI" id="CHEBI:60240"/>
    </ligand>
</feature>
<feature type="binding site" evidence="1">
    <location>
        <position position="36"/>
    </location>
    <ligand>
        <name>a divalent metal cation</name>
        <dbReference type="ChEBI" id="CHEBI:60240"/>
    </ligand>
</feature>
<feature type="binding site" evidence="1">
    <location>
        <position position="83"/>
    </location>
    <ligand>
        <name>a divalent metal cation</name>
        <dbReference type="ChEBI" id="CHEBI:60240"/>
    </ligand>
</feature>
<feature type="binding site" evidence="1">
    <location>
        <position position="83"/>
    </location>
    <ligand>
        <name>substrate</name>
    </ligand>
</feature>
<feature type="binding site" evidence="1">
    <location>
        <begin position="159"/>
        <end position="162"/>
    </location>
    <ligand>
        <name>substrate</name>
    </ligand>
</feature>
<feature type="binding site" evidence="1">
    <location>
        <begin position="188"/>
        <end position="190"/>
    </location>
    <ligand>
        <name>substrate</name>
    </ligand>
</feature>
<feature type="binding site" evidence="1">
    <location>
        <position position="188"/>
    </location>
    <ligand>
        <name>a divalent metal cation</name>
        <dbReference type="ChEBI" id="CHEBI:60240"/>
    </ligand>
</feature>
<feature type="binding site" evidence="1">
    <location>
        <begin position="210"/>
        <end position="212"/>
    </location>
    <ligand>
        <name>substrate</name>
    </ligand>
</feature>